<organism>
    <name type="scientific">Methanocaldococcus jannaschii (strain ATCC 43067 / DSM 2661 / JAL-1 / JCM 10045 / NBRC 100440)</name>
    <name type="common">Methanococcus jannaschii</name>
    <dbReference type="NCBI Taxonomy" id="243232"/>
    <lineage>
        <taxon>Archaea</taxon>
        <taxon>Methanobacteriati</taxon>
        <taxon>Methanobacteriota</taxon>
        <taxon>Methanomada group</taxon>
        <taxon>Methanococci</taxon>
        <taxon>Methanococcales</taxon>
        <taxon>Methanocaldococcaceae</taxon>
        <taxon>Methanocaldococcus</taxon>
    </lineage>
</organism>
<name>Y788_METJA</name>
<accession>Q58198</accession>
<keyword id="KW-1185">Reference proteome</keyword>
<gene>
    <name type="ordered locus">MJ0788</name>
</gene>
<proteinExistence type="predicted"/>
<reference key="1">
    <citation type="journal article" date="1996" name="Science">
        <title>Complete genome sequence of the methanogenic archaeon, Methanococcus jannaschii.</title>
        <authorList>
            <person name="Bult C.J."/>
            <person name="White O."/>
            <person name="Olsen G.J."/>
            <person name="Zhou L."/>
            <person name="Fleischmann R.D."/>
            <person name="Sutton G.G."/>
            <person name="Blake J.A."/>
            <person name="FitzGerald L.M."/>
            <person name="Clayton R.A."/>
            <person name="Gocayne J.D."/>
            <person name="Kerlavage A.R."/>
            <person name="Dougherty B.A."/>
            <person name="Tomb J.-F."/>
            <person name="Adams M.D."/>
            <person name="Reich C.I."/>
            <person name="Overbeek R."/>
            <person name="Kirkness E.F."/>
            <person name="Weinstock K.G."/>
            <person name="Merrick J.M."/>
            <person name="Glodek A."/>
            <person name="Scott J.L."/>
            <person name="Geoghagen N.S.M."/>
            <person name="Weidman J.F."/>
            <person name="Fuhrmann J.L."/>
            <person name="Nguyen D."/>
            <person name="Utterback T.R."/>
            <person name="Kelley J.M."/>
            <person name="Peterson J.D."/>
            <person name="Sadow P.W."/>
            <person name="Hanna M.C."/>
            <person name="Cotton M.D."/>
            <person name="Roberts K.M."/>
            <person name="Hurst M.A."/>
            <person name="Kaine B.P."/>
            <person name="Borodovsky M."/>
            <person name="Klenk H.-P."/>
            <person name="Fraser C.M."/>
            <person name="Smith H.O."/>
            <person name="Woese C.R."/>
            <person name="Venter J.C."/>
        </authorList>
    </citation>
    <scope>NUCLEOTIDE SEQUENCE [LARGE SCALE GENOMIC DNA]</scope>
    <source>
        <strain>ATCC 43067 / DSM 2661 / JAL-1 / JCM 10045 / NBRC 100440</strain>
    </source>
</reference>
<dbReference type="EMBL" id="L77117">
    <property type="protein sequence ID" value="AAB98787.1"/>
    <property type="molecule type" value="Genomic_DNA"/>
</dbReference>
<dbReference type="PIR" id="D64398">
    <property type="entry name" value="D64398"/>
</dbReference>
<dbReference type="STRING" id="243232.MJ_0788"/>
<dbReference type="PaxDb" id="243232-MJ_0788"/>
<dbReference type="EnsemblBacteria" id="AAB98787">
    <property type="protein sequence ID" value="AAB98787"/>
    <property type="gene ID" value="MJ_0788"/>
</dbReference>
<dbReference type="KEGG" id="mja:MJ_0788"/>
<dbReference type="eggNOG" id="arCOG06614">
    <property type="taxonomic scope" value="Archaea"/>
</dbReference>
<dbReference type="HOGENOM" id="CLU_2597743_0_0_2"/>
<dbReference type="InParanoid" id="Q58198"/>
<dbReference type="Proteomes" id="UP000000805">
    <property type="component" value="Chromosome"/>
</dbReference>
<feature type="chain" id="PRO_0000107039" description="Uncharacterized protein MJ0788">
    <location>
        <begin position="1"/>
        <end position="79"/>
    </location>
</feature>
<protein>
    <recommendedName>
        <fullName>Uncharacterized protein MJ0788</fullName>
    </recommendedName>
</protein>
<sequence length="79" mass="9582">MVKLMDIDEFLNYLSNATKENFKKTKHFEIRIELREDNIPNEEELFEILTKNKPVGILKQKDDKFLRYIMSLMKNMMLL</sequence>